<accession>B2J184</accession>
<protein>
    <recommendedName>
        <fullName evidence="1">NAD(P)H-quinone oxidoreductase subunit H</fullName>
        <ecNumber evidence="1">7.1.1.-</ecNumber>
    </recommendedName>
    <alternativeName>
        <fullName>NAD(P)H dehydrogenase subunit H</fullName>
    </alternativeName>
    <alternativeName>
        <fullName evidence="1">NADH-plastoquinone oxidoreductase subunit H</fullName>
    </alternativeName>
    <alternativeName>
        <fullName evidence="1">NDH-1 subunit H</fullName>
        <shortName evidence="1">NDH-H</shortName>
    </alternativeName>
</protein>
<proteinExistence type="inferred from homology"/>
<sequence length="394" mass="45158">MTRLETRTEPMVLNMGPHHPSMHGVLRLIMTLDGEDVVDCEPVIGYLHRGMEKIAENRTNVMYVPYVSRWDYAAGMFNEAVTVNAPEKLAGVAVPKRASYIRVIMLELNRIANHLLWFGPFLADVGAQTPFFYQFREREMIYDLWEAATGYRMVNNNYFRVGGVAADLPYGWVDKCLEFCDYLLPKVDEYERLVTDNPIFRRRVEGIGTITREEAINWGLSGPMLRASGVQWDLRKVDHYECYDDFDWDVQWETAGDCFARYVVRMREMRESVKIIRQAIKGLPGGPYENLEAKRLAAGKKSEWDAFDYQFIGKKVSPTFKIPKGEIYARVESGKGELGIYLVGDDNVFPARWKIRAADFNNLQIVPHLLRGMKVADIVVILGSVDVIMGSVDR</sequence>
<keyword id="KW-0472">Membrane</keyword>
<keyword id="KW-0520">NAD</keyword>
<keyword id="KW-0521">NADP</keyword>
<keyword id="KW-0618">Plastoquinone</keyword>
<keyword id="KW-0874">Quinone</keyword>
<keyword id="KW-1185">Reference proteome</keyword>
<keyword id="KW-0793">Thylakoid</keyword>
<keyword id="KW-1278">Translocase</keyword>
<keyword id="KW-0813">Transport</keyword>
<feature type="chain" id="PRO_0000371897" description="NAD(P)H-quinone oxidoreductase subunit H">
    <location>
        <begin position="1"/>
        <end position="394"/>
    </location>
</feature>
<reference key="1">
    <citation type="journal article" date="2013" name="Plant Physiol.">
        <title>A Nostoc punctiforme Sugar Transporter Necessary to Establish a Cyanobacterium-Plant Symbiosis.</title>
        <authorList>
            <person name="Ekman M."/>
            <person name="Picossi S."/>
            <person name="Campbell E.L."/>
            <person name="Meeks J.C."/>
            <person name="Flores E."/>
        </authorList>
    </citation>
    <scope>NUCLEOTIDE SEQUENCE [LARGE SCALE GENOMIC DNA]</scope>
    <source>
        <strain>ATCC 29133 / PCC 73102</strain>
    </source>
</reference>
<dbReference type="EC" id="7.1.1.-" evidence="1"/>
<dbReference type="EMBL" id="CP001037">
    <property type="protein sequence ID" value="ACC83315.1"/>
    <property type="molecule type" value="Genomic_DNA"/>
</dbReference>
<dbReference type="RefSeq" id="WP_012411270.1">
    <property type="nucleotide sequence ID" value="NC_010628.1"/>
</dbReference>
<dbReference type="SMR" id="B2J184"/>
<dbReference type="STRING" id="63737.Npun_F4970"/>
<dbReference type="EnsemblBacteria" id="ACC83315">
    <property type="protein sequence ID" value="ACC83315"/>
    <property type="gene ID" value="Npun_F4970"/>
</dbReference>
<dbReference type="KEGG" id="npu:Npun_F4970"/>
<dbReference type="eggNOG" id="COG0649">
    <property type="taxonomic scope" value="Bacteria"/>
</dbReference>
<dbReference type="HOGENOM" id="CLU_015134_1_2_3"/>
<dbReference type="OrthoDB" id="9801496at2"/>
<dbReference type="PhylomeDB" id="B2J184"/>
<dbReference type="Proteomes" id="UP000001191">
    <property type="component" value="Chromosome"/>
</dbReference>
<dbReference type="GO" id="GO:0031676">
    <property type="term" value="C:plasma membrane-derived thylakoid membrane"/>
    <property type="evidence" value="ECO:0007669"/>
    <property type="project" value="UniProtKB-SubCell"/>
</dbReference>
<dbReference type="GO" id="GO:0051287">
    <property type="term" value="F:NAD binding"/>
    <property type="evidence" value="ECO:0007669"/>
    <property type="project" value="InterPro"/>
</dbReference>
<dbReference type="GO" id="GO:0016655">
    <property type="term" value="F:oxidoreductase activity, acting on NAD(P)H, quinone or similar compound as acceptor"/>
    <property type="evidence" value="ECO:0007669"/>
    <property type="project" value="UniProtKB-UniRule"/>
</dbReference>
<dbReference type="GO" id="GO:0048038">
    <property type="term" value="F:quinone binding"/>
    <property type="evidence" value="ECO:0007669"/>
    <property type="project" value="UniProtKB-KW"/>
</dbReference>
<dbReference type="GO" id="GO:0019684">
    <property type="term" value="P:photosynthesis, light reaction"/>
    <property type="evidence" value="ECO:0007669"/>
    <property type="project" value="UniProtKB-UniRule"/>
</dbReference>
<dbReference type="Gene3D" id="1.10.645.10">
    <property type="entry name" value="Cytochrome-c3 Hydrogenase, chain B"/>
    <property type="match status" value="1"/>
</dbReference>
<dbReference type="HAMAP" id="MF_01358">
    <property type="entry name" value="NDH1_NuoD"/>
    <property type="match status" value="1"/>
</dbReference>
<dbReference type="InterPro" id="IPR001135">
    <property type="entry name" value="NADH_Q_OxRdtase_suD"/>
</dbReference>
<dbReference type="InterPro" id="IPR014029">
    <property type="entry name" value="NADH_UbQ_OxRdtase_49kDa_CS"/>
</dbReference>
<dbReference type="InterPro" id="IPR022885">
    <property type="entry name" value="NDH1_su_D/H"/>
</dbReference>
<dbReference type="InterPro" id="IPR029014">
    <property type="entry name" value="NiFe-Hase_large"/>
</dbReference>
<dbReference type="NCBIfam" id="TIGR01962">
    <property type="entry name" value="NuoD"/>
    <property type="match status" value="1"/>
</dbReference>
<dbReference type="NCBIfam" id="NF004739">
    <property type="entry name" value="PRK06075.1"/>
    <property type="match status" value="1"/>
</dbReference>
<dbReference type="NCBIfam" id="NF005649">
    <property type="entry name" value="PRK07415.1"/>
    <property type="match status" value="1"/>
</dbReference>
<dbReference type="PANTHER" id="PTHR11993:SF10">
    <property type="entry name" value="NADH DEHYDROGENASE [UBIQUINONE] IRON-SULFUR PROTEIN 2, MITOCHONDRIAL"/>
    <property type="match status" value="1"/>
</dbReference>
<dbReference type="PANTHER" id="PTHR11993">
    <property type="entry name" value="NADH-UBIQUINONE OXIDOREDUCTASE 49 KDA SUBUNIT"/>
    <property type="match status" value="1"/>
</dbReference>
<dbReference type="Pfam" id="PF00346">
    <property type="entry name" value="Complex1_49kDa"/>
    <property type="match status" value="1"/>
</dbReference>
<dbReference type="SUPFAM" id="SSF56762">
    <property type="entry name" value="HydB/Nqo4-like"/>
    <property type="match status" value="1"/>
</dbReference>
<dbReference type="PROSITE" id="PS00535">
    <property type="entry name" value="COMPLEX1_49K"/>
    <property type="match status" value="1"/>
</dbReference>
<comment type="function">
    <text evidence="1">NDH-1 shuttles electrons from an unknown electron donor, via FMN and iron-sulfur (Fe-S) centers, to quinones in the respiratory and/or the photosynthetic chain. The immediate electron acceptor for the enzyme in this species is believed to be plastoquinone. Couples the redox reaction to proton translocation, and thus conserves the redox energy in a proton gradient. Cyanobacterial NDH-1 also plays a role in inorganic carbon-concentration.</text>
</comment>
<comment type="catalytic activity">
    <reaction evidence="1">
        <text>a plastoquinone + NADH + (n+1) H(+)(in) = a plastoquinol + NAD(+) + n H(+)(out)</text>
        <dbReference type="Rhea" id="RHEA:42608"/>
        <dbReference type="Rhea" id="RHEA-COMP:9561"/>
        <dbReference type="Rhea" id="RHEA-COMP:9562"/>
        <dbReference type="ChEBI" id="CHEBI:15378"/>
        <dbReference type="ChEBI" id="CHEBI:17757"/>
        <dbReference type="ChEBI" id="CHEBI:57540"/>
        <dbReference type="ChEBI" id="CHEBI:57945"/>
        <dbReference type="ChEBI" id="CHEBI:62192"/>
    </reaction>
</comment>
<comment type="catalytic activity">
    <reaction evidence="1">
        <text>a plastoquinone + NADPH + (n+1) H(+)(in) = a plastoquinol + NADP(+) + n H(+)(out)</text>
        <dbReference type="Rhea" id="RHEA:42612"/>
        <dbReference type="Rhea" id="RHEA-COMP:9561"/>
        <dbReference type="Rhea" id="RHEA-COMP:9562"/>
        <dbReference type="ChEBI" id="CHEBI:15378"/>
        <dbReference type="ChEBI" id="CHEBI:17757"/>
        <dbReference type="ChEBI" id="CHEBI:57783"/>
        <dbReference type="ChEBI" id="CHEBI:58349"/>
        <dbReference type="ChEBI" id="CHEBI:62192"/>
    </reaction>
</comment>
<comment type="subunit">
    <text evidence="1">NDH-1 can be composed of about 15 different subunits; different subcomplexes with different compositions have been identified which probably have different functions.</text>
</comment>
<comment type="subcellular location">
    <subcellularLocation>
        <location evidence="1">Cellular thylakoid membrane</location>
        <topology evidence="1">Peripheral membrane protein</topology>
        <orientation evidence="1">Cytoplasmic side</orientation>
    </subcellularLocation>
</comment>
<comment type="similarity">
    <text evidence="1">Belongs to the complex I 49 kDa subunit family.</text>
</comment>
<evidence type="ECO:0000255" key="1">
    <source>
        <dbReference type="HAMAP-Rule" id="MF_01358"/>
    </source>
</evidence>
<gene>
    <name evidence="1" type="primary">ndhH</name>
    <name type="ordered locus">Npun_F4970</name>
</gene>
<organism>
    <name type="scientific">Nostoc punctiforme (strain ATCC 29133 / PCC 73102)</name>
    <dbReference type="NCBI Taxonomy" id="63737"/>
    <lineage>
        <taxon>Bacteria</taxon>
        <taxon>Bacillati</taxon>
        <taxon>Cyanobacteriota</taxon>
        <taxon>Cyanophyceae</taxon>
        <taxon>Nostocales</taxon>
        <taxon>Nostocaceae</taxon>
        <taxon>Nostoc</taxon>
    </lineage>
</organism>
<name>NDHH_NOSP7</name>